<proteinExistence type="inferred from homology"/>
<name>HTPG_SHESM</name>
<evidence type="ECO:0000255" key="1">
    <source>
        <dbReference type="HAMAP-Rule" id="MF_00505"/>
    </source>
</evidence>
<protein>
    <recommendedName>
        <fullName evidence="1">Chaperone protein HtpG</fullName>
    </recommendedName>
    <alternativeName>
        <fullName evidence="1">Heat shock protein HtpG</fullName>
    </alternativeName>
    <alternativeName>
        <fullName evidence="1">High temperature protein G</fullName>
    </alternativeName>
</protein>
<comment type="function">
    <text evidence="1">Molecular chaperone. Has ATPase activity.</text>
</comment>
<comment type="subunit">
    <text evidence="1">Homodimer.</text>
</comment>
<comment type="subcellular location">
    <subcellularLocation>
        <location evidence="1">Cytoplasm</location>
    </subcellularLocation>
</comment>
<comment type="similarity">
    <text evidence="1">Belongs to the heat shock protein 90 family.</text>
</comment>
<gene>
    <name evidence="1" type="primary">htpG</name>
    <name type="ordered locus">Shewmr4_2251</name>
</gene>
<accession>Q0HHZ5</accession>
<organism>
    <name type="scientific">Shewanella sp. (strain MR-4)</name>
    <dbReference type="NCBI Taxonomy" id="60480"/>
    <lineage>
        <taxon>Bacteria</taxon>
        <taxon>Pseudomonadati</taxon>
        <taxon>Pseudomonadota</taxon>
        <taxon>Gammaproteobacteria</taxon>
        <taxon>Alteromonadales</taxon>
        <taxon>Shewanellaceae</taxon>
        <taxon>Shewanella</taxon>
    </lineage>
</organism>
<reference key="1">
    <citation type="submission" date="2006-08" db="EMBL/GenBank/DDBJ databases">
        <title>Complete sequence of Shewanella sp. MR-4.</title>
        <authorList>
            <consortium name="US DOE Joint Genome Institute"/>
            <person name="Copeland A."/>
            <person name="Lucas S."/>
            <person name="Lapidus A."/>
            <person name="Barry K."/>
            <person name="Detter J.C."/>
            <person name="Glavina del Rio T."/>
            <person name="Hammon N."/>
            <person name="Israni S."/>
            <person name="Dalin E."/>
            <person name="Tice H."/>
            <person name="Pitluck S."/>
            <person name="Kiss H."/>
            <person name="Brettin T."/>
            <person name="Bruce D."/>
            <person name="Han C."/>
            <person name="Tapia R."/>
            <person name="Gilna P."/>
            <person name="Schmutz J."/>
            <person name="Larimer F."/>
            <person name="Land M."/>
            <person name="Hauser L."/>
            <person name="Kyrpides N."/>
            <person name="Mikhailova N."/>
            <person name="Nealson K."/>
            <person name="Konstantinidis K."/>
            <person name="Klappenbach J."/>
            <person name="Tiedje J."/>
            <person name="Richardson P."/>
        </authorList>
    </citation>
    <scope>NUCLEOTIDE SEQUENCE [LARGE SCALE GENOMIC DNA]</scope>
    <source>
        <strain>MR-4</strain>
    </source>
</reference>
<feature type="chain" id="PRO_1000014958" description="Chaperone protein HtpG">
    <location>
        <begin position="1"/>
        <end position="637"/>
    </location>
</feature>
<feature type="region of interest" description="A; substrate-binding" evidence="1">
    <location>
        <begin position="1"/>
        <end position="345"/>
    </location>
</feature>
<feature type="region of interest" description="B" evidence="1">
    <location>
        <begin position="346"/>
        <end position="562"/>
    </location>
</feature>
<feature type="region of interest" description="C" evidence="1">
    <location>
        <begin position="563"/>
        <end position="637"/>
    </location>
</feature>
<sequence length="637" mass="71753">MSQQETHGFQTEVKQLLHLMIHSLYSNKEIFLRELVSNAADAADKLRYLALTNDALYEGDGELRVRISADKEKGTVTIEDNGVGMTRDGVIEHLGTIAKSGTAEFFKNLSGEASKDSQLIGQFGVGFYSAFIVAKKVTVRTRAAGHKANEAVLWESEGEGSFTVDTITKASRGTEITLHLRDEEKEFADEWRLRSIITKYSDHISVPVEMWQEGTPERDGPDGEKIPATEGYWKVMNKATALWMRNKSEISDEEYQEFYKHISHDYTDALLWSHNRVEGKQEYTNLLYIPSKAPWDLWNRDRKHGLKLFVQRVFIMDDAEQFMPSYLRFVQGLIDSNDLPLNVSREILQDNHITKAMRTGITKRVLGMLEKLAKDDAEKYQQFWAEFGQVLKEGPAEDFANRERIAGLLRFASTHTGSAAPTVSLDDYLSRMKEGQTKIYYIVADSHEAAANSPHLELLRKKGIEVLLMSERIDEWLINHLTEYKEKQLHSVTRGELELGELEDAAEKEAQEKLAEESAPLVERIKAALGASVADVKVTSRLTDTPACVVTGEGEMSSQMIKLMQAAGQPVPEVKPTFEINPAHPLVSRLNDLQDEAAFADWSNLLLQQAQLSEKGSLADPSAFIKLMNQMLLANLK</sequence>
<keyword id="KW-0067">ATP-binding</keyword>
<keyword id="KW-0143">Chaperone</keyword>
<keyword id="KW-0963">Cytoplasm</keyword>
<keyword id="KW-0547">Nucleotide-binding</keyword>
<keyword id="KW-0346">Stress response</keyword>
<dbReference type="EMBL" id="CP000446">
    <property type="protein sequence ID" value="ABI39322.1"/>
    <property type="molecule type" value="Genomic_DNA"/>
</dbReference>
<dbReference type="RefSeq" id="WP_011623012.1">
    <property type="nucleotide sequence ID" value="NC_008321.1"/>
</dbReference>
<dbReference type="SMR" id="Q0HHZ5"/>
<dbReference type="KEGG" id="she:Shewmr4_2251"/>
<dbReference type="HOGENOM" id="CLU_006684_3_0_6"/>
<dbReference type="GO" id="GO:0005737">
    <property type="term" value="C:cytoplasm"/>
    <property type="evidence" value="ECO:0007669"/>
    <property type="project" value="UniProtKB-SubCell"/>
</dbReference>
<dbReference type="GO" id="GO:0005524">
    <property type="term" value="F:ATP binding"/>
    <property type="evidence" value="ECO:0007669"/>
    <property type="project" value="UniProtKB-UniRule"/>
</dbReference>
<dbReference type="GO" id="GO:0016887">
    <property type="term" value="F:ATP hydrolysis activity"/>
    <property type="evidence" value="ECO:0007669"/>
    <property type="project" value="InterPro"/>
</dbReference>
<dbReference type="GO" id="GO:0140662">
    <property type="term" value="F:ATP-dependent protein folding chaperone"/>
    <property type="evidence" value="ECO:0007669"/>
    <property type="project" value="InterPro"/>
</dbReference>
<dbReference type="GO" id="GO:0051082">
    <property type="term" value="F:unfolded protein binding"/>
    <property type="evidence" value="ECO:0007669"/>
    <property type="project" value="UniProtKB-UniRule"/>
</dbReference>
<dbReference type="CDD" id="cd16927">
    <property type="entry name" value="HATPase_Hsp90-like"/>
    <property type="match status" value="1"/>
</dbReference>
<dbReference type="FunFam" id="3.30.230.80:FF:000002">
    <property type="entry name" value="Molecular chaperone HtpG"/>
    <property type="match status" value="1"/>
</dbReference>
<dbReference type="FunFam" id="3.30.565.10:FF:000009">
    <property type="entry name" value="Molecular chaperone HtpG"/>
    <property type="match status" value="1"/>
</dbReference>
<dbReference type="Gene3D" id="3.30.230.80">
    <property type="match status" value="1"/>
</dbReference>
<dbReference type="Gene3D" id="3.40.50.11260">
    <property type="match status" value="1"/>
</dbReference>
<dbReference type="Gene3D" id="1.20.120.790">
    <property type="entry name" value="Heat shock protein 90, C-terminal domain"/>
    <property type="match status" value="1"/>
</dbReference>
<dbReference type="Gene3D" id="3.30.565.10">
    <property type="entry name" value="Histidine kinase-like ATPase, C-terminal domain"/>
    <property type="match status" value="1"/>
</dbReference>
<dbReference type="HAMAP" id="MF_00505">
    <property type="entry name" value="HSP90"/>
    <property type="match status" value="1"/>
</dbReference>
<dbReference type="InterPro" id="IPR036890">
    <property type="entry name" value="HATPase_C_sf"/>
</dbReference>
<dbReference type="InterPro" id="IPR019805">
    <property type="entry name" value="Heat_shock_protein_90_CS"/>
</dbReference>
<dbReference type="InterPro" id="IPR037196">
    <property type="entry name" value="HSP90_C"/>
</dbReference>
<dbReference type="InterPro" id="IPR001404">
    <property type="entry name" value="Hsp90_fam"/>
</dbReference>
<dbReference type="InterPro" id="IPR020575">
    <property type="entry name" value="Hsp90_N"/>
</dbReference>
<dbReference type="InterPro" id="IPR020568">
    <property type="entry name" value="Ribosomal_Su5_D2-typ_SF"/>
</dbReference>
<dbReference type="NCBIfam" id="NF003555">
    <property type="entry name" value="PRK05218.1"/>
    <property type="match status" value="1"/>
</dbReference>
<dbReference type="PANTHER" id="PTHR11528">
    <property type="entry name" value="HEAT SHOCK PROTEIN 90 FAMILY MEMBER"/>
    <property type="match status" value="1"/>
</dbReference>
<dbReference type="Pfam" id="PF13589">
    <property type="entry name" value="HATPase_c_3"/>
    <property type="match status" value="1"/>
</dbReference>
<dbReference type="Pfam" id="PF00183">
    <property type="entry name" value="HSP90"/>
    <property type="match status" value="1"/>
</dbReference>
<dbReference type="PIRSF" id="PIRSF002583">
    <property type="entry name" value="Hsp90"/>
    <property type="match status" value="1"/>
</dbReference>
<dbReference type="PRINTS" id="PR00775">
    <property type="entry name" value="HEATSHOCK90"/>
</dbReference>
<dbReference type="SMART" id="SM00387">
    <property type="entry name" value="HATPase_c"/>
    <property type="match status" value="1"/>
</dbReference>
<dbReference type="SUPFAM" id="SSF55874">
    <property type="entry name" value="ATPase domain of HSP90 chaperone/DNA topoisomerase II/histidine kinase"/>
    <property type="match status" value="1"/>
</dbReference>
<dbReference type="SUPFAM" id="SSF110942">
    <property type="entry name" value="HSP90 C-terminal domain"/>
    <property type="match status" value="1"/>
</dbReference>
<dbReference type="SUPFAM" id="SSF54211">
    <property type="entry name" value="Ribosomal protein S5 domain 2-like"/>
    <property type="match status" value="1"/>
</dbReference>
<dbReference type="PROSITE" id="PS00298">
    <property type="entry name" value="HSP90"/>
    <property type="match status" value="1"/>
</dbReference>